<comment type="function">
    <text evidence="1">Catalyzes the oxidation of 5,10-methylenetetrahydrofolate to 5,10-methenyltetrahydrofolate and then the hydrolysis of 5,10-methenyltetrahydrofolate to 10-formyltetrahydrofolate.</text>
</comment>
<comment type="catalytic activity">
    <reaction evidence="1">
        <text>(6R)-5,10-methylene-5,6,7,8-tetrahydrofolate + NADP(+) = (6R)-5,10-methenyltetrahydrofolate + NADPH</text>
        <dbReference type="Rhea" id="RHEA:22812"/>
        <dbReference type="ChEBI" id="CHEBI:15636"/>
        <dbReference type="ChEBI" id="CHEBI:57455"/>
        <dbReference type="ChEBI" id="CHEBI:57783"/>
        <dbReference type="ChEBI" id="CHEBI:58349"/>
        <dbReference type="EC" id="1.5.1.5"/>
    </reaction>
</comment>
<comment type="catalytic activity">
    <reaction evidence="1">
        <text>(6R)-5,10-methenyltetrahydrofolate + H2O = (6R)-10-formyltetrahydrofolate + H(+)</text>
        <dbReference type="Rhea" id="RHEA:23700"/>
        <dbReference type="ChEBI" id="CHEBI:15377"/>
        <dbReference type="ChEBI" id="CHEBI:15378"/>
        <dbReference type="ChEBI" id="CHEBI:57455"/>
        <dbReference type="ChEBI" id="CHEBI:195366"/>
        <dbReference type="EC" id="3.5.4.9"/>
    </reaction>
</comment>
<comment type="pathway">
    <text evidence="1">One-carbon metabolism; tetrahydrofolate interconversion.</text>
</comment>
<comment type="subunit">
    <text evidence="1">Homodimer.</text>
</comment>
<comment type="similarity">
    <text evidence="1">Belongs to the tetrahydrofolate dehydrogenase/cyclohydrolase family.</text>
</comment>
<name>FOLD_FRATF</name>
<reference key="1">
    <citation type="journal article" date="2009" name="PLoS ONE">
        <title>Complete genome sequence of Francisella tularensis subspecies holarctica FTNF002-00.</title>
        <authorList>
            <person name="Barabote R.D."/>
            <person name="Xie G."/>
            <person name="Brettin T.S."/>
            <person name="Hinrichs S.H."/>
            <person name="Fey P.D."/>
            <person name="Jay J.J."/>
            <person name="Engle J.L."/>
            <person name="Godbole S.D."/>
            <person name="Noronha J.M."/>
            <person name="Scheuermann R.H."/>
            <person name="Zhou L.W."/>
            <person name="Lion C."/>
            <person name="Dempsey M.P."/>
        </authorList>
    </citation>
    <scope>NUCLEOTIDE SEQUENCE [LARGE SCALE GENOMIC DNA]</scope>
    <source>
        <strain>FTNF002-00 / FTA</strain>
    </source>
</reference>
<evidence type="ECO:0000255" key="1">
    <source>
        <dbReference type="HAMAP-Rule" id="MF_01576"/>
    </source>
</evidence>
<dbReference type="EC" id="1.5.1.5" evidence="1"/>
<dbReference type="EC" id="3.5.4.9" evidence="1"/>
<dbReference type="EMBL" id="CP000803">
    <property type="protein sequence ID" value="ABU60894.1"/>
    <property type="molecule type" value="Genomic_DNA"/>
</dbReference>
<dbReference type="RefSeq" id="WP_003014628.1">
    <property type="nucleotide sequence ID" value="NC_009749.1"/>
</dbReference>
<dbReference type="SMR" id="A7NA91"/>
<dbReference type="KEGG" id="fta:FTA_0417"/>
<dbReference type="HOGENOM" id="CLU_034045_2_1_6"/>
<dbReference type="UniPathway" id="UPA00193"/>
<dbReference type="GO" id="GO:0005829">
    <property type="term" value="C:cytosol"/>
    <property type="evidence" value="ECO:0007669"/>
    <property type="project" value="TreeGrafter"/>
</dbReference>
<dbReference type="GO" id="GO:0004477">
    <property type="term" value="F:methenyltetrahydrofolate cyclohydrolase activity"/>
    <property type="evidence" value="ECO:0007669"/>
    <property type="project" value="UniProtKB-UniRule"/>
</dbReference>
<dbReference type="GO" id="GO:0004488">
    <property type="term" value="F:methylenetetrahydrofolate dehydrogenase (NADP+) activity"/>
    <property type="evidence" value="ECO:0007669"/>
    <property type="project" value="UniProtKB-UniRule"/>
</dbReference>
<dbReference type="GO" id="GO:0000105">
    <property type="term" value="P:L-histidine biosynthetic process"/>
    <property type="evidence" value="ECO:0007669"/>
    <property type="project" value="UniProtKB-KW"/>
</dbReference>
<dbReference type="GO" id="GO:0009086">
    <property type="term" value="P:methionine biosynthetic process"/>
    <property type="evidence" value="ECO:0007669"/>
    <property type="project" value="UniProtKB-KW"/>
</dbReference>
<dbReference type="GO" id="GO:0006164">
    <property type="term" value="P:purine nucleotide biosynthetic process"/>
    <property type="evidence" value="ECO:0007669"/>
    <property type="project" value="UniProtKB-KW"/>
</dbReference>
<dbReference type="GO" id="GO:0035999">
    <property type="term" value="P:tetrahydrofolate interconversion"/>
    <property type="evidence" value="ECO:0007669"/>
    <property type="project" value="UniProtKB-UniRule"/>
</dbReference>
<dbReference type="CDD" id="cd01080">
    <property type="entry name" value="NAD_bind_m-THF_DH_Cyclohyd"/>
    <property type="match status" value="1"/>
</dbReference>
<dbReference type="FunFam" id="3.40.50.10860:FF:000001">
    <property type="entry name" value="Bifunctional protein FolD"/>
    <property type="match status" value="1"/>
</dbReference>
<dbReference type="FunFam" id="3.40.50.720:FF:000094">
    <property type="entry name" value="Bifunctional protein FolD"/>
    <property type="match status" value="1"/>
</dbReference>
<dbReference type="Gene3D" id="3.40.50.10860">
    <property type="entry name" value="Leucine Dehydrogenase, chain A, domain 1"/>
    <property type="match status" value="1"/>
</dbReference>
<dbReference type="Gene3D" id="3.40.50.720">
    <property type="entry name" value="NAD(P)-binding Rossmann-like Domain"/>
    <property type="match status" value="1"/>
</dbReference>
<dbReference type="HAMAP" id="MF_01576">
    <property type="entry name" value="THF_DHG_CYH"/>
    <property type="match status" value="1"/>
</dbReference>
<dbReference type="InterPro" id="IPR046346">
    <property type="entry name" value="Aminoacid_DH-like_N_sf"/>
</dbReference>
<dbReference type="InterPro" id="IPR036291">
    <property type="entry name" value="NAD(P)-bd_dom_sf"/>
</dbReference>
<dbReference type="InterPro" id="IPR000672">
    <property type="entry name" value="THF_DH/CycHdrlase"/>
</dbReference>
<dbReference type="InterPro" id="IPR020630">
    <property type="entry name" value="THF_DH/CycHdrlase_cat_dom"/>
</dbReference>
<dbReference type="InterPro" id="IPR020867">
    <property type="entry name" value="THF_DH/CycHdrlase_CS"/>
</dbReference>
<dbReference type="InterPro" id="IPR020631">
    <property type="entry name" value="THF_DH/CycHdrlase_NAD-bd_dom"/>
</dbReference>
<dbReference type="NCBIfam" id="NF008058">
    <property type="entry name" value="PRK10792.1"/>
    <property type="match status" value="1"/>
</dbReference>
<dbReference type="NCBIfam" id="NF010777">
    <property type="entry name" value="PRK14180.1"/>
    <property type="match status" value="1"/>
</dbReference>
<dbReference type="NCBIfam" id="NF010783">
    <property type="entry name" value="PRK14186.1"/>
    <property type="match status" value="1"/>
</dbReference>
<dbReference type="PANTHER" id="PTHR48099:SF5">
    <property type="entry name" value="C-1-TETRAHYDROFOLATE SYNTHASE, CYTOPLASMIC"/>
    <property type="match status" value="1"/>
</dbReference>
<dbReference type="PANTHER" id="PTHR48099">
    <property type="entry name" value="C-1-TETRAHYDROFOLATE SYNTHASE, CYTOPLASMIC-RELATED"/>
    <property type="match status" value="1"/>
</dbReference>
<dbReference type="Pfam" id="PF00763">
    <property type="entry name" value="THF_DHG_CYH"/>
    <property type="match status" value="1"/>
</dbReference>
<dbReference type="Pfam" id="PF02882">
    <property type="entry name" value="THF_DHG_CYH_C"/>
    <property type="match status" value="1"/>
</dbReference>
<dbReference type="PRINTS" id="PR00085">
    <property type="entry name" value="THFDHDRGNASE"/>
</dbReference>
<dbReference type="SUPFAM" id="SSF53223">
    <property type="entry name" value="Aminoacid dehydrogenase-like, N-terminal domain"/>
    <property type="match status" value="1"/>
</dbReference>
<dbReference type="SUPFAM" id="SSF51735">
    <property type="entry name" value="NAD(P)-binding Rossmann-fold domains"/>
    <property type="match status" value="1"/>
</dbReference>
<dbReference type="PROSITE" id="PS00766">
    <property type="entry name" value="THF_DHG_CYH_1"/>
    <property type="match status" value="1"/>
</dbReference>
<dbReference type="PROSITE" id="PS00767">
    <property type="entry name" value="THF_DHG_CYH_2"/>
    <property type="match status" value="1"/>
</dbReference>
<sequence length="282" mass="30482">MILIDGKSLSKDLKERLATQVQEYKHHTAITPKLVAIIVGNDPASKTYVASKEKACAQVGIDSQVITLPEHTTESELLELIDQLNNDSSVHAILVQLPLPAHINKNNVIYSIKPEKDVDGFHPTNVGRLQLRDKKCLESCTPKGIMTMLREYGIKTEGAYVVVVGASNVVGKPVSQLLLNAKATVTTCHRFTTDLKSHTTKADILIVAVGKPNFITADMVKEGAVVIDVGINHVDGKIVGDVDFAAVKDKVAAITPVPGGVGPMTITELLYNTFQCAQELNR</sequence>
<keyword id="KW-0028">Amino-acid biosynthesis</keyword>
<keyword id="KW-0368">Histidine biosynthesis</keyword>
<keyword id="KW-0378">Hydrolase</keyword>
<keyword id="KW-0486">Methionine biosynthesis</keyword>
<keyword id="KW-0511">Multifunctional enzyme</keyword>
<keyword id="KW-0521">NADP</keyword>
<keyword id="KW-0554">One-carbon metabolism</keyword>
<keyword id="KW-0560">Oxidoreductase</keyword>
<keyword id="KW-0658">Purine biosynthesis</keyword>
<feature type="chain" id="PRO_1000069244" description="Bifunctional protein FolD">
    <location>
        <begin position="1"/>
        <end position="282"/>
    </location>
</feature>
<feature type="binding site" evidence="1">
    <location>
        <begin position="165"/>
        <end position="167"/>
    </location>
    <ligand>
        <name>NADP(+)</name>
        <dbReference type="ChEBI" id="CHEBI:58349"/>
    </ligand>
</feature>
<feature type="binding site" evidence="1">
    <location>
        <position position="231"/>
    </location>
    <ligand>
        <name>NADP(+)</name>
        <dbReference type="ChEBI" id="CHEBI:58349"/>
    </ligand>
</feature>
<proteinExistence type="inferred from homology"/>
<accession>A7NA91</accession>
<protein>
    <recommendedName>
        <fullName evidence="1">Bifunctional protein FolD</fullName>
    </recommendedName>
    <domain>
        <recommendedName>
            <fullName evidence="1">Methylenetetrahydrofolate dehydrogenase</fullName>
            <ecNumber evidence="1">1.5.1.5</ecNumber>
        </recommendedName>
    </domain>
    <domain>
        <recommendedName>
            <fullName evidence="1">Methenyltetrahydrofolate cyclohydrolase</fullName>
            <ecNumber evidence="1">3.5.4.9</ecNumber>
        </recommendedName>
    </domain>
</protein>
<organism>
    <name type="scientific">Francisella tularensis subsp. holarctica (strain FTNF002-00 / FTA)</name>
    <dbReference type="NCBI Taxonomy" id="458234"/>
    <lineage>
        <taxon>Bacteria</taxon>
        <taxon>Pseudomonadati</taxon>
        <taxon>Pseudomonadota</taxon>
        <taxon>Gammaproteobacteria</taxon>
        <taxon>Thiotrichales</taxon>
        <taxon>Francisellaceae</taxon>
        <taxon>Francisella</taxon>
    </lineage>
</organism>
<gene>
    <name evidence="1" type="primary">folD</name>
    <name type="ordered locus">FTA_0417</name>
</gene>